<protein>
    <recommendedName>
        <fullName evidence="1">Sec-independent protein translocase protein TatA</fullName>
    </recommendedName>
</protein>
<organism>
    <name type="scientific">Erythrobacter litoralis (strain HTCC2594)</name>
    <dbReference type="NCBI Taxonomy" id="314225"/>
    <lineage>
        <taxon>Bacteria</taxon>
        <taxon>Pseudomonadati</taxon>
        <taxon>Pseudomonadota</taxon>
        <taxon>Alphaproteobacteria</taxon>
        <taxon>Sphingomonadales</taxon>
        <taxon>Erythrobacteraceae</taxon>
        <taxon>Erythrobacter/Porphyrobacter group</taxon>
        <taxon>Erythrobacter</taxon>
    </lineage>
</organism>
<reference key="1">
    <citation type="journal article" date="2009" name="J. Bacteriol.">
        <title>Complete genome sequence of Erythrobacter litoralis HTCC2594.</title>
        <authorList>
            <person name="Oh H.M."/>
            <person name="Giovannoni S.J."/>
            <person name="Ferriera S."/>
            <person name="Johnson J."/>
            <person name="Cho J.C."/>
        </authorList>
    </citation>
    <scope>NUCLEOTIDE SEQUENCE [LARGE SCALE GENOMIC DNA]</scope>
    <source>
        <strain>HTCC2594</strain>
    </source>
</reference>
<feature type="chain" id="PRO_1000044386" description="Sec-independent protein translocase protein TatA">
    <location>
        <begin position="1"/>
        <end position="80"/>
    </location>
</feature>
<feature type="transmembrane region" description="Helical" evidence="1">
    <location>
        <begin position="1"/>
        <end position="21"/>
    </location>
</feature>
<feature type="region of interest" description="Disordered" evidence="2">
    <location>
        <begin position="38"/>
        <end position="80"/>
    </location>
</feature>
<feature type="compositionally biased region" description="Basic and acidic residues" evidence="2">
    <location>
        <begin position="58"/>
        <end position="80"/>
    </location>
</feature>
<evidence type="ECO:0000255" key="1">
    <source>
        <dbReference type="HAMAP-Rule" id="MF_00236"/>
    </source>
</evidence>
<evidence type="ECO:0000256" key="2">
    <source>
        <dbReference type="SAM" id="MobiDB-lite"/>
    </source>
</evidence>
<proteinExistence type="inferred from homology"/>
<sequence length="80" mass="8458">MGQIGIWQILIIALVILVLFGRGKISDMMGDFGKGVSSFKKGLNEEDKPAEPAAKIEGPSHEAKPAGEAAKDPRPADKQG</sequence>
<accession>Q2ND30</accession>
<keyword id="KW-0997">Cell inner membrane</keyword>
<keyword id="KW-1003">Cell membrane</keyword>
<keyword id="KW-0472">Membrane</keyword>
<keyword id="KW-0653">Protein transport</keyword>
<keyword id="KW-1185">Reference proteome</keyword>
<keyword id="KW-0811">Translocation</keyword>
<keyword id="KW-0812">Transmembrane</keyword>
<keyword id="KW-1133">Transmembrane helix</keyword>
<keyword id="KW-0813">Transport</keyword>
<dbReference type="EMBL" id="CP000157">
    <property type="protein sequence ID" value="ABC62411.1"/>
    <property type="molecule type" value="Genomic_DNA"/>
</dbReference>
<dbReference type="RefSeq" id="WP_011413287.1">
    <property type="nucleotide sequence ID" value="NC_007722.1"/>
</dbReference>
<dbReference type="SMR" id="Q2ND30"/>
<dbReference type="STRING" id="314225.ELI_01595"/>
<dbReference type="KEGG" id="eli:ELI_01595"/>
<dbReference type="eggNOG" id="COG1826">
    <property type="taxonomic scope" value="Bacteria"/>
</dbReference>
<dbReference type="HOGENOM" id="CLU_086034_5_0_5"/>
<dbReference type="OrthoDB" id="7161179at2"/>
<dbReference type="Proteomes" id="UP000008808">
    <property type="component" value="Chromosome"/>
</dbReference>
<dbReference type="GO" id="GO:0033281">
    <property type="term" value="C:TAT protein transport complex"/>
    <property type="evidence" value="ECO:0007669"/>
    <property type="project" value="UniProtKB-UniRule"/>
</dbReference>
<dbReference type="GO" id="GO:0008320">
    <property type="term" value="F:protein transmembrane transporter activity"/>
    <property type="evidence" value="ECO:0007669"/>
    <property type="project" value="UniProtKB-UniRule"/>
</dbReference>
<dbReference type="GO" id="GO:0043953">
    <property type="term" value="P:protein transport by the Tat complex"/>
    <property type="evidence" value="ECO:0007669"/>
    <property type="project" value="UniProtKB-UniRule"/>
</dbReference>
<dbReference type="Gene3D" id="1.20.5.3310">
    <property type="match status" value="1"/>
</dbReference>
<dbReference type="HAMAP" id="MF_00236">
    <property type="entry name" value="TatA_E"/>
    <property type="match status" value="1"/>
</dbReference>
<dbReference type="InterPro" id="IPR003369">
    <property type="entry name" value="TatA/B/E"/>
</dbReference>
<dbReference type="InterPro" id="IPR006312">
    <property type="entry name" value="TatA/E"/>
</dbReference>
<dbReference type="NCBIfam" id="TIGR01411">
    <property type="entry name" value="tatAE"/>
    <property type="match status" value="1"/>
</dbReference>
<dbReference type="PANTHER" id="PTHR42982">
    <property type="entry name" value="SEC-INDEPENDENT PROTEIN TRANSLOCASE PROTEIN TATA"/>
    <property type="match status" value="1"/>
</dbReference>
<dbReference type="PANTHER" id="PTHR42982:SF1">
    <property type="entry name" value="SEC-INDEPENDENT PROTEIN TRANSLOCASE PROTEIN TATA"/>
    <property type="match status" value="1"/>
</dbReference>
<dbReference type="Pfam" id="PF02416">
    <property type="entry name" value="TatA_B_E"/>
    <property type="match status" value="1"/>
</dbReference>
<name>TATA_ERYLH</name>
<gene>
    <name evidence="1" type="primary">tatA</name>
    <name type="ordered locus">ELI_01595</name>
</gene>
<comment type="function">
    <text evidence="1">Part of the twin-arginine translocation (Tat) system that transports large folded proteins containing a characteristic twin-arginine motif in their signal peptide across membranes. TatA could form the protein-conducting channel of the Tat system.</text>
</comment>
<comment type="subunit">
    <text evidence="1">The Tat system comprises two distinct complexes: a TatABC complex, containing multiple copies of TatA, TatB and TatC subunits, and a separate TatA complex, containing only TatA subunits. Substrates initially bind to the TatABC complex, which probably triggers association of the separate TatA complex to form the active translocon.</text>
</comment>
<comment type="subcellular location">
    <subcellularLocation>
        <location evidence="1">Cell inner membrane</location>
        <topology evidence="1">Single-pass membrane protein</topology>
    </subcellularLocation>
</comment>
<comment type="similarity">
    <text evidence="1">Belongs to the TatA/E family.</text>
</comment>